<comment type="function">
    <text evidence="4">May be a peptide transporter or a protein that facilitates peptide internalization (PubMed:26860543).</text>
</comment>
<comment type="subcellular location">
    <subcellularLocation>
        <location>Cell inner membrane</location>
        <topology>Multi-pass membrane protein</topology>
    </subcellularLocation>
</comment>
<comment type="disruption phenotype">
    <text evidence="2">Mutants show a slight decrease in the internalization level of some proline-rich antimicrobial peptides of eukaryotic origin.</text>
</comment>
<comment type="similarity">
    <text evidence="3">Belongs to the UPF0382 family.</text>
</comment>
<dbReference type="EMBL" id="U01030">
    <property type="protein sequence ID" value="AAC13743.1"/>
    <property type="molecule type" value="Genomic_DNA"/>
</dbReference>
<dbReference type="EMBL" id="X73413">
    <property type="protein sequence ID" value="CAA51814.1"/>
    <property type="molecule type" value="Genomic_DNA"/>
</dbReference>
<dbReference type="EMBL" id="U29581">
    <property type="protein sequence ID" value="AAB40457.1"/>
    <property type="molecule type" value="Genomic_DNA"/>
</dbReference>
<dbReference type="EMBL" id="U00096">
    <property type="protein sequence ID" value="AAC75849.1"/>
    <property type="molecule type" value="Genomic_DNA"/>
</dbReference>
<dbReference type="EMBL" id="AP009048">
    <property type="protein sequence ID" value="BAE76879.1"/>
    <property type="molecule type" value="Genomic_DNA"/>
</dbReference>
<dbReference type="PIR" id="I41066">
    <property type="entry name" value="I41066"/>
</dbReference>
<dbReference type="RefSeq" id="NP_417287.1">
    <property type="nucleotide sequence ID" value="NC_000913.3"/>
</dbReference>
<dbReference type="RefSeq" id="WP_000203905.1">
    <property type="nucleotide sequence ID" value="NZ_STEB01000030.1"/>
</dbReference>
<dbReference type="BioGRID" id="4260934">
    <property type="interactions" value="30"/>
</dbReference>
<dbReference type="FunCoup" id="P0ADR2">
    <property type="interactions" value="532"/>
</dbReference>
<dbReference type="STRING" id="511145.b2807"/>
<dbReference type="PaxDb" id="511145-b2807"/>
<dbReference type="DNASU" id="947279"/>
<dbReference type="EnsemblBacteria" id="AAC75849">
    <property type="protein sequence ID" value="AAC75849"/>
    <property type="gene ID" value="b2807"/>
</dbReference>
<dbReference type="GeneID" id="947279"/>
<dbReference type="KEGG" id="ecj:JW2778"/>
<dbReference type="KEGG" id="eco:b2807"/>
<dbReference type="KEGG" id="ecoc:C3026_15430"/>
<dbReference type="PATRIC" id="fig|1411691.4.peg.3926"/>
<dbReference type="EchoBASE" id="EB1741"/>
<dbReference type="eggNOG" id="COG2363">
    <property type="taxonomic scope" value="Bacteria"/>
</dbReference>
<dbReference type="HOGENOM" id="CLU_096548_3_2_6"/>
<dbReference type="InParanoid" id="P0ADR2"/>
<dbReference type="OMA" id="VEYQFYH"/>
<dbReference type="OrthoDB" id="9802121at2"/>
<dbReference type="PhylomeDB" id="P0ADR2"/>
<dbReference type="BioCyc" id="EcoCyc:EG11793-MONOMER"/>
<dbReference type="PRO" id="PR:P0ADR2"/>
<dbReference type="Proteomes" id="UP000000625">
    <property type="component" value="Chromosome"/>
</dbReference>
<dbReference type="GO" id="GO:0005886">
    <property type="term" value="C:plasma membrane"/>
    <property type="evidence" value="ECO:0000314"/>
    <property type="project" value="EcoCyc"/>
</dbReference>
<dbReference type="InterPro" id="IPR006696">
    <property type="entry name" value="DUF423"/>
</dbReference>
<dbReference type="NCBIfam" id="NF008125">
    <property type="entry name" value="PRK10873.1"/>
    <property type="match status" value="1"/>
</dbReference>
<dbReference type="PANTHER" id="PTHR43461">
    <property type="entry name" value="TRANSMEMBRANE PROTEIN 256"/>
    <property type="match status" value="1"/>
</dbReference>
<dbReference type="PANTHER" id="PTHR43461:SF1">
    <property type="entry name" value="TRANSMEMBRANE PROTEIN 256"/>
    <property type="match status" value="1"/>
</dbReference>
<dbReference type="Pfam" id="PF04241">
    <property type="entry name" value="DUF423"/>
    <property type="match status" value="1"/>
</dbReference>
<organism>
    <name type="scientific">Escherichia coli (strain K12)</name>
    <dbReference type="NCBI Taxonomy" id="83333"/>
    <lineage>
        <taxon>Bacteria</taxon>
        <taxon>Pseudomonadati</taxon>
        <taxon>Pseudomonadota</taxon>
        <taxon>Gammaproteobacteria</taxon>
        <taxon>Enterobacterales</taxon>
        <taxon>Enterobacteriaceae</taxon>
        <taxon>Escherichia</taxon>
    </lineage>
</organism>
<protein>
    <recommendedName>
        <fullName>UPF0382 inner membrane protein YgdD</fullName>
    </recommendedName>
</protein>
<evidence type="ECO:0000255" key="1"/>
<evidence type="ECO:0000269" key="2">
    <source>
    </source>
</evidence>
<evidence type="ECO:0000305" key="3"/>
<evidence type="ECO:0000305" key="4">
    <source>
    </source>
</evidence>
<feature type="chain" id="PRO_0000169329" description="UPF0382 inner membrane protein YgdD">
    <location>
        <begin position="1"/>
        <end position="131"/>
    </location>
</feature>
<feature type="topological domain" description="Periplasmic" evidence="1">
    <location>
        <begin position="1"/>
        <end position="4"/>
    </location>
</feature>
<feature type="transmembrane region" description="Helical" evidence="1">
    <location>
        <begin position="5"/>
        <end position="25"/>
    </location>
</feature>
<feature type="topological domain" description="Cytoplasmic" evidence="1">
    <location>
        <begin position="26"/>
        <end position="64"/>
    </location>
</feature>
<feature type="transmembrane region" description="Helical" evidence="1">
    <location>
        <begin position="65"/>
        <end position="85"/>
    </location>
</feature>
<feature type="topological domain" description="Periplasmic" evidence="1">
    <location>
        <begin position="86"/>
        <end position="97"/>
    </location>
</feature>
<feature type="transmembrane region" description="Helical" evidence="1">
    <location>
        <begin position="98"/>
        <end position="118"/>
    </location>
</feature>
<feature type="topological domain" description="Cytoplasmic" evidence="1">
    <location>
        <begin position="119"/>
        <end position="131"/>
    </location>
</feature>
<feature type="sequence conflict" description="In Ref. 1; AAC13743." evidence="3" ref="1">
    <original>A</original>
    <variation>G</variation>
    <location>
        <position position="34"/>
    </location>
</feature>
<proteinExistence type="evidence at protein level"/>
<accession>P0ADR2</accession>
<accession>P32065</accession>
<accession>Q2MA27</accession>
<accession>Q46667</accession>
<name>YGDD_ECOLI</name>
<keyword id="KW-0997">Cell inner membrane</keyword>
<keyword id="KW-1003">Cell membrane</keyword>
<keyword id="KW-0472">Membrane</keyword>
<keyword id="KW-1185">Reference proteome</keyword>
<keyword id="KW-0812">Transmembrane</keyword>
<keyword id="KW-1133">Transmembrane helix</keyword>
<gene>
    <name type="primary">ygdD</name>
    <name type="ordered locus">b2807</name>
    <name type="ordered locus">JW2778</name>
</gene>
<reference key="1">
    <citation type="journal article" date="1994" name="J. Bacteriol.">
        <title>DNA sequence and characterization of GcvA, a LysR family regulatory protein for the Escherichia coli glycine cleavage enzyme system.</title>
        <authorList>
            <person name="Wilson R.L."/>
            <person name="Stauffer G.V."/>
        </authorList>
    </citation>
    <scope>NUCLEOTIDE SEQUENCE [GENOMIC DNA]</scope>
    <source>
        <strain>K12</strain>
    </source>
</reference>
<reference key="2">
    <citation type="journal article" date="1995" name="Microbiology">
        <title>GcvA, a LysR-type transcriptional regulator protein, activates expression of the cloned Citrobacter freundii ampC beta-lactamase gene in Escherichia coli: cross-talk between DNA-binding proteins.</title>
        <authorList>
            <person name="Everett M.J."/>
            <person name="Walsh T."/>
            <person name="Guay G."/>
            <person name="Bennett P.M."/>
        </authorList>
    </citation>
    <scope>NUCLEOTIDE SEQUENCE [GENOMIC DNA]</scope>
    <source>
        <strain>K12</strain>
    </source>
</reference>
<reference key="3">
    <citation type="journal article" date="1997" name="Science">
        <title>The complete genome sequence of Escherichia coli K-12.</title>
        <authorList>
            <person name="Blattner F.R."/>
            <person name="Plunkett G. III"/>
            <person name="Bloch C.A."/>
            <person name="Perna N.T."/>
            <person name="Burland V."/>
            <person name="Riley M."/>
            <person name="Collado-Vides J."/>
            <person name="Glasner J.D."/>
            <person name="Rode C.K."/>
            <person name="Mayhew G.F."/>
            <person name="Gregor J."/>
            <person name="Davis N.W."/>
            <person name="Kirkpatrick H.A."/>
            <person name="Goeden M.A."/>
            <person name="Rose D.J."/>
            <person name="Mau B."/>
            <person name="Shao Y."/>
        </authorList>
    </citation>
    <scope>NUCLEOTIDE SEQUENCE [LARGE SCALE GENOMIC DNA]</scope>
    <source>
        <strain>K12 / MG1655 / ATCC 47076</strain>
    </source>
</reference>
<reference key="4">
    <citation type="journal article" date="2006" name="Mol. Syst. Biol.">
        <title>Highly accurate genome sequences of Escherichia coli K-12 strains MG1655 and W3110.</title>
        <authorList>
            <person name="Hayashi K."/>
            <person name="Morooka N."/>
            <person name="Yamamoto Y."/>
            <person name="Fujita K."/>
            <person name="Isono K."/>
            <person name="Choi S."/>
            <person name="Ohtsubo E."/>
            <person name="Baba T."/>
            <person name="Wanner B.L."/>
            <person name="Mori H."/>
            <person name="Horiuchi T."/>
        </authorList>
    </citation>
    <scope>NUCLEOTIDE SEQUENCE [LARGE SCALE GENOMIC DNA]</scope>
    <source>
        <strain>K12 / W3110 / ATCC 27325 / DSM 5911</strain>
    </source>
</reference>
<reference key="5">
    <citation type="journal article" date="2005" name="Science">
        <title>Global topology analysis of the Escherichia coli inner membrane proteome.</title>
        <authorList>
            <person name="Daley D.O."/>
            <person name="Rapp M."/>
            <person name="Granseth E."/>
            <person name="Melen K."/>
            <person name="Drew D."/>
            <person name="von Heijne G."/>
        </authorList>
    </citation>
    <scope>TOPOLOGY [LARGE SCALE ANALYSIS]</scope>
    <source>
        <strain>K12 / MG1655 / ATCC 47076</strain>
    </source>
</reference>
<reference key="6">
    <citation type="journal article" date="2016" name="Microbiology">
        <title>Inner membrane proteins YgdD and SbmA are required for the complete susceptibility of Escherichia coli to the proline-rich antimicrobial peptide arasin 1(1-25).</title>
        <authorList>
            <person name="Paulsen V.S."/>
            <person name="Mardirossian M."/>
            <person name="Blencke H.M."/>
            <person name="Benincasa M."/>
            <person name="Runti G."/>
            <person name="Nepa M."/>
            <person name="Haug T."/>
            <person name="Stensvaag K."/>
            <person name="Scocchi M."/>
        </authorList>
    </citation>
    <scope>FUNCTION</scope>
    <scope>DISRUPTION PHENOTYPE</scope>
    <source>
        <strain>K12 / BW25113</strain>
    </source>
</reference>
<sequence length="131" mass="14333">MTSRFMLIFAAISGFIFVALGAFGAHVLSKTMGAVEMGWIQTGLEYQAFHTLAILGLAVAMQRRISIWFYWSSVFLALGTVLFSGSLYCLALSHLRLWAFVTPVGGVSFLAGWALMLVGAIRLKRKGVSHE</sequence>